<evidence type="ECO:0000250" key="1"/>
<evidence type="ECO:0000250" key="2">
    <source>
        <dbReference type="UniProtKB" id="P70196"/>
    </source>
</evidence>
<evidence type="ECO:0000250" key="3">
    <source>
        <dbReference type="UniProtKB" id="Q9Y4K3"/>
    </source>
</evidence>
<evidence type="ECO:0000255" key="4"/>
<evidence type="ECO:0000255" key="5">
    <source>
        <dbReference type="PROSITE-ProRule" id="PRU00129"/>
    </source>
</evidence>
<evidence type="ECO:0000255" key="6">
    <source>
        <dbReference type="PROSITE-ProRule" id="PRU00175"/>
    </source>
</evidence>
<evidence type="ECO:0000255" key="7">
    <source>
        <dbReference type="PROSITE-ProRule" id="PRU00207"/>
    </source>
</evidence>
<evidence type="ECO:0000305" key="8"/>
<dbReference type="EC" id="2.3.2.27"/>
<dbReference type="EMBL" id="CR855449">
    <property type="protein sequence ID" value="CAJ82470.1"/>
    <property type="molecule type" value="mRNA"/>
</dbReference>
<dbReference type="EMBL" id="BC082342">
    <property type="protein sequence ID" value="AAH82342.1"/>
    <property type="molecule type" value="mRNA"/>
</dbReference>
<dbReference type="RefSeq" id="NP_001008162.2">
    <property type="nucleotide sequence ID" value="NM_001008161.2"/>
</dbReference>
<dbReference type="SMR" id="Q28DL4"/>
<dbReference type="FunCoup" id="Q28DL4">
    <property type="interactions" value="3047"/>
</dbReference>
<dbReference type="STRING" id="8364.ENSXETP00000036656"/>
<dbReference type="PaxDb" id="8364-ENSXETP00000016445"/>
<dbReference type="DNASU" id="493524"/>
<dbReference type="GeneID" id="493524"/>
<dbReference type="KEGG" id="xtr:493524"/>
<dbReference type="AGR" id="Xenbase:XB-GENE-480628"/>
<dbReference type="CTD" id="7189"/>
<dbReference type="Xenbase" id="XB-GENE-480628">
    <property type="gene designation" value="traf6"/>
</dbReference>
<dbReference type="eggNOG" id="KOG0297">
    <property type="taxonomic scope" value="Eukaryota"/>
</dbReference>
<dbReference type="InParanoid" id="Q28DL4"/>
<dbReference type="OMA" id="FMHLQAL"/>
<dbReference type="OrthoDB" id="6475149at2759"/>
<dbReference type="Reactome" id="R-XTR-166058">
    <property type="pathway name" value="MyD88:MAL(TIRAP) cascade initiated on plasma membrane"/>
</dbReference>
<dbReference type="Reactome" id="R-XTR-209543">
    <property type="pathway name" value="p75NTR recruits signalling complexes"/>
</dbReference>
<dbReference type="Reactome" id="R-XTR-450302">
    <property type="pathway name" value="activated TAK1 mediates p38 MAPK activation"/>
</dbReference>
<dbReference type="Reactome" id="R-XTR-450321">
    <property type="pathway name" value="JNK (c-Jun kinases) phosphorylation and activation mediated by activated human TAK1"/>
</dbReference>
<dbReference type="Reactome" id="R-XTR-5689880">
    <property type="pathway name" value="Ub-specific processing proteases"/>
</dbReference>
<dbReference type="Reactome" id="R-XTR-5689896">
    <property type="pathway name" value="Ovarian tumor domain proteases"/>
</dbReference>
<dbReference type="Reactome" id="R-XTR-937042">
    <property type="pathway name" value="IRAK2 mediated activation of TAK1 complex"/>
</dbReference>
<dbReference type="Reactome" id="R-XTR-9645460">
    <property type="pathway name" value="Alpha-protein kinase 1 signaling pathway"/>
</dbReference>
<dbReference type="Reactome" id="R-XTR-975138">
    <property type="pathway name" value="TRAF6 mediated induction of NFkB and MAP kinases upon TLR7/8 or 9 activation"/>
</dbReference>
<dbReference type="Reactome" id="R-XTR-975163">
    <property type="pathway name" value="IRAK2 mediated activation of TAK1 complex upon TLR7/8 or 9 stimulation"/>
</dbReference>
<dbReference type="Reactome" id="R-XTR-975871">
    <property type="pathway name" value="MyD88 cascade initiated on plasma membrane"/>
</dbReference>
<dbReference type="UniPathway" id="UPA00143"/>
<dbReference type="Proteomes" id="UP000008143">
    <property type="component" value="Chromosome 4"/>
</dbReference>
<dbReference type="Bgee" id="ENSXETG00000007549">
    <property type="expression patterns" value="Expressed in 4-cell stage embryo and 12 other cell types or tissues"/>
</dbReference>
<dbReference type="GO" id="GO:0005938">
    <property type="term" value="C:cell cortex"/>
    <property type="evidence" value="ECO:0007669"/>
    <property type="project" value="UniProtKB-SubCell"/>
</dbReference>
<dbReference type="GO" id="GO:0005811">
    <property type="term" value="C:lipid droplet"/>
    <property type="evidence" value="ECO:0007669"/>
    <property type="project" value="UniProtKB-SubCell"/>
</dbReference>
<dbReference type="GO" id="GO:0005634">
    <property type="term" value="C:nucleus"/>
    <property type="evidence" value="ECO:0007669"/>
    <property type="project" value="UniProtKB-SubCell"/>
</dbReference>
<dbReference type="GO" id="GO:0005164">
    <property type="term" value="F:tumor necrosis factor receptor binding"/>
    <property type="evidence" value="ECO:0007669"/>
    <property type="project" value="InterPro"/>
</dbReference>
<dbReference type="GO" id="GO:0004842">
    <property type="term" value="F:ubiquitin-protein transferase activity"/>
    <property type="evidence" value="ECO:0000250"/>
    <property type="project" value="UniProtKB"/>
</dbReference>
<dbReference type="GO" id="GO:0008270">
    <property type="term" value="F:zinc ion binding"/>
    <property type="evidence" value="ECO:0007669"/>
    <property type="project" value="UniProtKB-KW"/>
</dbReference>
<dbReference type="GO" id="GO:0141124">
    <property type="term" value="P:intracellular signaling cassette"/>
    <property type="evidence" value="ECO:0007669"/>
    <property type="project" value="UniProtKB-ARBA"/>
</dbReference>
<dbReference type="GO" id="GO:0070534">
    <property type="term" value="P:protein K63-linked ubiquitination"/>
    <property type="evidence" value="ECO:0000250"/>
    <property type="project" value="UniProtKB"/>
</dbReference>
<dbReference type="GO" id="GO:0042981">
    <property type="term" value="P:regulation of apoptotic process"/>
    <property type="evidence" value="ECO:0007669"/>
    <property type="project" value="InterPro"/>
</dbReference>
<dbReference type="GO" id="GO:0043122">
    <property type="term" value="P:regulation of canonical NF-kappaB signal transduction"/>
    <property type="evidence" value="ECO:0007669"/>
    <property type="project" value="InterPro"/>
</dbReference>
<dbReference type="GO" id="GO:0019222">
    <property type="term" value="P:regulation of metabolic process"/>
    <property type="evidence" value="ECO:0007669"/>
    <property type="project" value="UniProtKB-ARBA"/>
</dbReference>
<dbReference type="CDD" id="cd03776">
    <property type="entry name" value="MATH_TRAF6"/>
    <property type="match status" value="1"/>
</dbReference>
<dbReference type="CDD" id="cd16643">
    <property type="entry name" value="mRING-HC-C3HC3D_TRAF6"/>
    <property type="match status" value="1"/>
</dbReference>
<dbReference type="FunFam" id="2.60.210.10:FF:000010">
    <property type="entry name" value="TNF receptor-associated factor"/>
    <property type="match status" value="1"/>
</dbReference>
<dbReference type="FunFam" id="3.30.40.10:FF:000179">
    <property type="entry name" value="TNF receptor-associated factor"/>
    <property type="match status" value="1"/>
</dbReference>
<dbReference type="FunFam" id="3.30.40.10:FF:000211">
    <property type="entry name" value="TNF receptor-associated factor"/>
    <property type="match status" value="1"/>
</dbReference>
<dbReference type="Gene3D" id="2.60.210.10">
    <property type="entry name" value="Apoptosis, Tumor Necrosis Factor Receptor Associated Protein 2, Chain A"/>
    <property type="match status" value="1"/>
</dbReference>
<dbReference type="Gene3D" id="3.30.40.10">
    <property type="entry name" value="Zinc/RING finger domain, C3HC4 (zinc finger)"/>
    <property type="match status" value="3"/>
</dbReference>
<dbReference type="InterPro" id="IPR002083">
    <property type="entry name" value="MATH/TRAF_dom"/>
</dbReference>
<dbReference type="InterPro" id="IPR012227">
    <property type="entry name" value="TNF_rcpt-assoc_TRAF_met"/>
</dbReference>
<dbReference type="InterPro" id="IPR008974">
    <property type="entry name" value="TRAF-like"/>
</dbReference>
<dbReference type="InterPro" id="IPR049342">
    <property type="entry name" value="TRAF1-6_MATH_dom"/>
</dbReference>
<dbReference type="InterPro" id="IPR037309">
    <property type="entry name" value="TRAF6_MATH"/>
</dbReference>
<dbReference type="InterPro" id="IPR027139">
    <property type="entry name" value="TRAF6_RING-HC"/>
</dbReference>
<dbReference type="InterPro" id="IPR041310">
    <property type="entry name" value="TRAF6_Z2"/>
</dbReference>
<dbReference type="InterPro" id="IPR001841">
    <property type="entry name" value="Znf_RING"/>
</dbReference>
<dbReference type="InterPro" id="IPR013083">
    <property type="entry name" value="Znf_RING/FYVE/PHD"/>
</dbReference>
<dbReference type="InterPro" id="IPR017907">
    <property type="entry name" value="Znf_RING_CS"/>
</dbReference>
<dbReference type="InterPro" id="IPR001293">
    <property type="entry name" value="Znf_TRAF"/>
</dbReference>
<dbReference type="PANTHER" id="PTHR10131">
    <property type="entry name" value="TNF RECEPTOR ASSOCIATED FACTOR"/>
    <property type="match status" value="1"/>
</dbReference>
<dbReference type="PANTHER" id="PTHR10131:SF152">
    <property type="entry name" value="TNF RECEPTOR-ASSOCIATED FACTOR 6"/>
    <property type="match status" value="1"/>
</dbReference>
<dbReference type="Pfam" id="PF21355">
    <property type="entry name" value="TRAF-mep_MATH"/>
    <property type="match status" value="1"/>
</dbReference>
<dbReference type="Pfam" id="PF18048">
    <property type="entry name" value="TRAF6_Z2"/>
    <property type="match status" value="1"/>
</dbReference>
<dbReference type="Pfam" id="PF13923">
    <property type="entry name" value="zf-C3HC4_2"/>
    <property type="match status" value="1"/>
</dbReference>
<dbReference type="Pfam" id="PF02176">
    <property type="entry name" value="zf-TRAF"/>
    <property type="match status" value="1"/>
</dbReference>
<dbReference type="PIRSF" id="PIRSF015614">
    <property type="entry name" value="TRAF"/>
    <property type="match status" value="1"/>
</dbReference>
<dbReference type="SMART" id="SM00061">
    <property type="entry name" value="MATH"/>
    <property type="match status" value="1"/>
</dbReference>
<dbReference type="SMART" id="SM00184">
    <property type="entry name" value="RING"/>
    <property type="match status" value="1"/>
</dbReference>
<dbReference type="SUPFAM" id="SSF57850">
    <property type="entry name" value="RING/U-box"/>
    <property type="match status" value="1"/>
</dbReference>
<dbReference type="SUPFAM" id="SSF49599">
    <property type="entry name" value="TRAF domain-like"/>
    <property type="match status" value="3"/>
</dbReference>
<dbReference type="PROSITE" id="PS50144">
    <property type="entry name" value="MATH"/>
    <property type="match status" value="1"/>
</dbReference>
<dbReference type="PROSITE" id="PS00518">
    <property type="entry name" value="ZF_RING_1"/>
    <property type="match status" value="1"/>
</dbReference>
<dbReference type="PROSITE" id="PS50089">
    <property type="entry name" value="ZF_RING_2"/>
    <property type="match status" value="1"/>
</dbReference>
<dbReference type="PROSITE" id="PS50145">
    <property type="entry name" value="ZF_TRAF"/>
    <property type="match status" value="2"/>
</dbReference>
<feature type="chain" id="PRO_0000391615" description="TNF receptor-associated factor 6">
    <location>
        <begin position="1"/>
        <end position="558"/>
    </location>
</feature>
<feature type="domain" description="MATH" evidence="5">
    <location>
        <begin position="386"/>
        <end position="535"/>
    </location>
</feature>
<feature type="zinc finger region" description="RING-type; degenerate" evidence="6">
    <location>
        <begin position="72"/>
        <end position="111"/>
    </location>
</feature>
<feature type="zinc finger region" description="TRAF-type 1" evidence="7">
    <location>
        <begin position="148"/>
        <end position="204"/>
    </location>
</feature>
<feature type="zinc finger region" description="TRAF-type 2" evidence="7">
    <location>
        <begin position="205"/>
        <end position="261"/>
    </location>
</feature>
<feature type="coiled-coil region" evidence="4">
    <location>
        <begin position="321"/>
        <end position="384"/>
    </location>
</feature>
<feature type="sequence conflict" description="In Ref. 2; AAH82342." evidence="8" ref="2">
    <original>C</original>
    <variation>S</variation>
    <location>
        <position position="19"/>
    </location>
</feature>
<feature type="sequence conflict" description="In Ref. 2; AAH82342." evidence="8" ref="2">
    <original>V</original>
    <variation>L</variation>
    <location>
        <position position="196"/>
    </location>
</feature>
<feature type="sequence conflict" description="In Ref. 2; AAH82342." evidence="8" ref="2">
    <original>T</original>
    <variation>S</variation>
    <location>
        <position position="316"/>
    </location>
</feature>
<keyword id="KW-0175">Coiled coil</keyword>
<keyword id="KW-0963">Cytoplasm</keyword>
<keyword id="KW-0551">Lipid droplet</keyword>
<keyword id="KW-0479">Metal-binding</keyword>
<keyword id="KW-0539">Nucleus</keyword>
<keyword id="KW-1185">Reference proteome</keyword>
<keyword id="KW-0677">Repeat</keyword>
<keyword id="KW-0808">Transferase</keyword>
<keyword id="KW-0833">Ubl conjugation pathway</keyword>
<keyword id="KW-0862">Zinc</keyword>
<keyword id="KW-0863">Zinc-finger</keyword>
<comment type="function">
    <text evidence="3">E3 ubiquitin ligase that, together with UBE2N and UBE2V1, mediates the synthesis of 'Lys-63'-linked-polyubiquitin chains conjugated to proteins, such as IKBKG, IRAK1, AKT1 and AKT2. Also mediates ubiquitination of free/unanchored polyubiquitin chain that leads to MAP3K7 activation.</text>
</comment>
<comment type="catalytic activity">
    <reaction evidence="3">
        <text>S-ubiquitinyl-[E2 ubiquitin-conjugating enzyme]-L-cysteine + [acceptor protein]-L-lysine = [E2 ubiquitin-conjugating enzyme]-L-cysteine + N(6)-ubiquitinyl-[acceptor protein]-L-lysine.</text>
        <dbReference type="EC" id="2.3.2.27"/>
    </reaction>
</comment>
<comment type="pathway">
    <text evidence="3">Protein modification; protein ubiquitination.</text>
</comment>
<comment type="subunit">
    <text evidence="3">Homotrimer. Homooligomer.</text>
</comment>
<comment type="subcellular location">
    <subcellularLocation>
        <location evidence="3">Cytoplasm</location>
    </subcellularLocation>
    <subcellularLocation>
        <location evidence="3">Cytoplasm</location>
        <location evidence="3">Cell cortex</location>
    </subcellularLocation>
    <subcellularLocation>
        <location evidence="3">Nucleus</location>
    </subcellularLocation>
    <subcellularLocation>
        <location evidence="2">Lipid droplet</location>
    </subcellularLocation>
</comment>
<comment type="domain">
    <text evidence="1">The coiled coil domain mediates homo- and hetero-oligomerization.</text>
</comment>
<comment type="domain">
    <text evidence="1">The MATH/TRAF domain binds to receptor cytoplasmic domains.</text>
</comment>
<comment type="similarity">
    <text evidence="8">Belongs to the TNF receptor-associated factor family. A subfamily.</text>
</comment>
<accession>Q28DL4</accession>
<accession>Q641J5</accession>
<name>TRAF6_XENTR</name>
<reference key="1">
    <citation type="submission" date="2006-10" db="EMBL/GenBank/DDBJ databases">
        <authorList>
            <consortium name="Sanger Xenopus tropicalis EST/cDNA project"/>
        </authorList>
    </citation>
    <scope>NUCLEOTIDE SEQUENCE [LARGE SCALE MRNA]</scope>
    <source>
        <tissue>Neurula</tissue>
    </source>
</reference>
<reference key="2">
    <citation type="submission" date="2004-09" db="EMBL/GenBank/DDBJ databases">
        <authorList>
            <consortium name="NIH - Xenopus Gene Collection (XGC) project"/>
        </authorList>
    </citation>
    <scope>NUCLEOTIDE SEQUENCE [LARGE SCALE MRNA]</scope>
    <source>
        <tissue>Embryo</tissue>
    </source>
</reference>
<gene>
    <name type="primary">traf6</name>
    <name type="ORF">TNeu045k15.1</name>
</gene>
<sequence length="558" mass="63411">MSILNCRPSFDGVDTDDACCGAMASACCVNTKEDGESPSAGSPSGTPQSLVLEDVQGYDVEFDPPLESKYECPICLMALREAVQTPCGHRFCKACILKSIRDAGHKCPVDNESLMENQLFPDNFAKREILSLRVKCPSQGCTETMELRHLERHLVRCDFAGVECSQCQSSFPKYSLQKHKFEECPRRQIFCENCAVAMALEDKLNHDQTCPLAYVTCEYCQTNLIREQMPAHYSMDCTMAPIPCMYYEFGCTEKMQRNDLARHLQEFTQAHMRMMAQTLRSFSSSVTPTSHMPDISFCDPSQFEPAPPSVATVHSTHTPSQNDCTQETRNLRETIEQLEGRLVRQDHQIRELIAKMETQCTYVNELKHTIRSLDNRLGEMESQQCSGIFIWRINNFNSLLKNQEEERPVVIHSQGFYTGKPGYKLCLRLHLQLPSAQRCANYISLFVHTMQGEYDSLLPWPLQGTIRLSILDQSEGVAMQDQEEVMDTKPELLAFQRPTVARNPKGFGYVTFMHLQALKQRQYVKNDTLLVRCSVTTHLDLISPRREGFQPRSGDGAL</sequence>
<protein>
    <recommendedName>
        <fullName>TNF receptor-associated factor 6</fullName>
        <ecNumber>2.3.2.27</ecNumber>
    </recommendedName>
    <alternativeName>
        <fullName>E3 ubiquitin-protein ligase TRAF6</fullName>
    </alternativeName>
    <alternativeName>
        <fullName evidence="8">RING-type E3 ubiquitin transferase TRAF6</fullName>
    </alternativeName>
</protein>
<organism>
    <name type="scientific">Xenopus tropicalis</name>
    <name type="common">Western clawed frog</name>
    <name type="synonym">Silurana tropicalis</name>
    <dbReference type="NCBI Taxonomy" id="8364"/>
    <lineage>
        <taxon>Eukaryota</taxon>
        <taxon>Metazoa</taxon>
        <taxon>Chordata</taxon>
        <taxon>Craniata</taxon>
        <taxon>Vertebrata</taxon>
        <taxon>Euteleostomi</taxon>
        <taxon>Amphibia</taxon>
        <taxon>Batrachia</taxon>
        <taxon>Anura</taxon>
        <taxon>Pipoidea</taxon>
        <taxon>Pipidae</taxon>
        <taxon>Xenopodinae</taxon>
        <taxon>Xenopus</taxon>
        <taxon>Silurana</taxon>
    </lineage>
</organism>
<proteinExistence type="evidence at transcript level"/>